<reference key="1">
    <citation type="journal article" date="2006" name="J. Neurochem.">
        <title>GRK1 and GRK7: unique cellular distribution and widely different activities of opsin phosphorylation in the zebrafish rods and cones.</title>
        <authorList>
            <person name="Wada Y."/>
            <person name="Sugiyama J."/>
            <person name="Okano T."/>
            <person name="Fukada Y."/>
        </authorList>
    </citation>
    <scope>NUCLEOTIDE SEQUENCE [MRNA]</scope>
    <scope>CATALYTIC ACTIVITY</scope>
    <scope>BIOPHYSICOCHEMICAL PROPERTIES</scope>
    <scope>TISSUE SPECIFICITY</scope>
    <scope>FUNCTION</scope>
</reference>
<reference key="2">
    <citation type="submission" date="2008-04" db="EMBL/GenBank/DDBJ databases">
        <authorList>
            <consortium name="NIH - Zebrafish Gene Collection (ZGC) project"/>
        </authorList>
    </citation>
    <scope>NUCLEOTIDE SEQUENCE [LARGE SCALE MRNA]</scope>
</reference>
<feature type="chain" id="PRO_0000412814" description="Rhodopsin kinase grk7-b">
    <location>
        <begin position="1"/>
        <end position="545"/>
    </location>
</feature>
<feature type="propeptide" id="PRO_0000412815" description="Removed in mature form" evidence="1">
    <location>
        <begin position="546"/>
        <end position="548"/>
    </location>
</feature>
<feature type="domain" description="RGS" evidence="6">
    <location>
        <begin position="53"/>
        <end position="172"/>
    </location>
</feature>
<feature type="domain" description="Protein kinase" evidence="5">
    <location>
        <begin position="187"/>
        <end position="446"/>
    </location>
</feature>
<feature type="domain" description="AGC-kinase C-terminal" evidence="7">
    <location>
        <begin position="447"/>
        <end position="512"/>
    </location>
</feature>
<feature type="region of interest" description="Disordered" evidence="9">
    <location>
        <begin position="520"/>
        <end position="548"/>
    </location>
</feature>
<feature type="active site" description="Proton acceptor" evidence="5 8">
    <location>
        <position position="312"/>
    </location>
</feature>
<feature type="binding site" evidence="5">
    <location>
        <begin position="193"/>
        <end position="201"/>
    </location>
    <ligand>
        <name>ATP</name>
        <dbReference type="ChEBI" id="CHEBI:30616"/>
    </ligand>
</feature>
<feature type="binding site" evidence="5">
    <location>
        <position position="216"/>
    </location>
    <ligand>
        <name>ATP</name>
        <dbReference type="ChEBI" id="CHEBI:30616"/>
    </ligand>
</feature>
<feature type="modified residue" description="Phosphoserine; by PKA" evidence="2">
    <location>
        <position position="33"/>
    </location>
</feature>
<feature type="modified residue" description="Cysteine methyl ester" evidence="4">
    <location>
        <position position="545"/>
    </location>
</feature>
<feature type="lipid moiety-binding region" description="S-geranylgeranyl cysteine" evidence="4">
    <location>
        <position position="545"/>
    </location>
</feature>
<feature type="sequence conflict" description="In Ref. 1; BAE92859 and 2; AAI62212." evidence="11" ref="1 2">
    <original>V</original>
    <variation>A</variation>
    <location>
        <position position="47"/>
    </location>
</feature>
<feature type="sequence conflict" description="In Ref. 1; BAE92859 and 2; AAI62212/AAI62221." evidence="11" ref="1 2">
    <original>N</original>
    <variation>D</variation>
    <location>
        <position position="339"/>
    </location>
</feature>
<feature type="sequence conflict" description="In Ref. 1; BAE92859 and 2; AAI62212/AAI62221." evidence="11" ref="1 2">
    <original>R</original>
    <variation>Q</variation>
    <location>
        <position position="412"/>
    </location>
</feature>
<feature type="sequence conflict" description="In Ref. 1; BAE92859 and 2; AAI62212/AAI62221." evidence="11" ref="1 2">
    <original>V</original>
    <variation>A</variation>
    <location>
        <position position="504"/>
    </location>
</feature>
<comment type="function">
    <text evidence="10">Retina-specific kinase involved in the shutoff of the photoresponse and adaptation to changing light conditions via cone opsin phosphorylation, including rhodopsin (RHO).</text>
</comment>
<comment type="catalytic activity">
    <reaction evidence="10">
        <text>L-threonyl-[rhodopsin] + ATP = O-phospho-L-threonyl-[rhodopsin] + ADP + H(+)</text>
        <dbReference type="Rhea" id="RHEA:56552"/>
        <dbReference type="Rhea" id="RHEA-COMP:14596"/>
        <dbReference type="Rhea" id="RHEA-COMP:14597"/>
        <dbReference type="ChEBI" id="CHEBI:15378"/>
        <dbReference type="ChEBI" id="CHEBI:30013"/>
        <dbReference type="ChEBI" id="CHEBI:30616"/>
        <dbReference type="ChEBI" id="CHEBI:61977"/>
        <dbReference type="ChEBI" id="CHEBI:456216"/>
        <dbReference type="EC" id="2.7.11.14"/>
    </reaction>
</comment>
<comment type="catalytic activity">
    <reaction evidence="10">
        <text>L-seryl-[rhodopsin] + ATP = O-phospho-L-seryl-[rhodopsin] + ADP + H(+)</text>
        <dbReference type="Rhea" id="RHEA:23356"/>
        <dbReference type="Rhea" id="RHEA-COMP:14594"/>
        <dbReference type="Rhea" id="RHEA-COMP:14595"/>
        <dbReference type="ChEBI" id="CHEBI:15378"/>
        <dbReference type="ChEBI" id="CHEBI:29999"/>
        <dbReference type="ChEBI" id="CHEBI:30616"/>
        <dbReference type="ChEBI" id="CHEBI:83421"/>
        <dbReference type="ChEBI" id="CHEBI:456216"/>
        <dbReference type="EC" id="2.7.11.14"/>
    </reaction>
</comment>
<comment type="subcellular location">
    <subcellularLocation>
        <location evidence="3">Membrane</location>
        <topology evidence="3">Lipid-anchor</topology>
    </subcellularLocation>
</comment>
<comment type="tissue specificity">
    <text evidence="10">Expressed in the eyes (at protein level). Expressed in the eyes, the pineal gland and in the brain.</text>
</comment>
<comment type="PTM">
    <text evidence="2">Phosphorylation at Ser-33 is regulated by light and activated by cAMP.</text>
</comment>
<comment type="miscellaneous">
    <text>Although the protein is present in a diversity of vertebrates ranging from bony fish to mammals, the mouse and rat orthologous proteins do not exist.</text>
</comment>
<comment type="similarity">
    <text evidence="11">Belongs to the protein kinase superfamily. AGC Ser/Thr protein kinase family. GPRK subfamily.</text>
</comment>
<protein>
    <recommendedName>
        <fullName>Rhodopsin kinase grk7-b</fullName>
        <ecNumber evidence="10">2.7.11.14</ecNumber>
    </recommendedName>
    <alternativeName>
        <fullName>G protein-coupled receptor kinase 7-2</fullName>
    </alternativeName>
    <alternativeName>
        <fullName>G protein-coupled receptor kinase 7B</fullName>
    </alternativeName>
</protein>
<organism>
    <name type="scientific">Danio rerio</name>
    <name type="common">Zebrafish</name>
    <name type="synonym">Brachydanio rerio</name>
    <dbReference type="NCBI Taxonomy" id="7955"/>
    <lineage>
        <taxon>Eukaryota</taxon>
        <taxon>Metazoa</taxon>
        <taxon>Chordata</taxon>
        <taxon>Craniata</taxon>
        <taxon>Vertebrata</taxon>
        <taxon>Euteleostomi</taxon>
        <taxon>Actinopterygii</taxon>
        <taxon>Neopterygii</taxon>
        <taxon>Teleostei</taxon>
        <taxon>Ostariophysi</taxon>
        <taxon>Cypriniformes</taxon>
        <taxon>Danionidae</taxon>
        <taxon>Danioninae</taxon>
        <taxon>Danio</taxon>
    </lineage>
</organism>
<name>GRK7B_DANRE</name>
<proteinExistence type="evidence at protein level"/>
<gene>
    <name type="primary">grk7b</name>
    <name type="synonym">grk7-2</name>
</gene>
<sequence>MSDMGGLKNLVANTDYLKAQSLDEKEIKKRRCSLGLPHLGNCTDVRVSVSKGFEDICEQQPIGRACFRQFLSVSSPEYLAAAELLDELNCWNLAEAEAKEEARLNIINKFCKADSKSFLAFLTEDEAEKCKAVSEKDFEEVMMGQVKEATQKFLRGQPFEEYQTSLFFDRFVQWKKFEKQPITDKYFYEFRTLGKGGFGEVCGVQVKTTGQMYACKKLDKKRLKKKSGEKMALLEKKILEMVNSLFIVNLAYAFDTKTHLCLVMTLMSGGDLKYHIFHVGEVGIEMERIIHYTAQITSGILHLHSMDIVYRDMKPENVLLDCQGQCRLSDLGLAVELPNGKTTTQKAGTKGYMAPEILKQEPYRTSVDWWALGCSIYEMVAGRVPFRDHKEKVAKEELLRRTLEDEVKFEHRNFDAPSKDIISLFLKRNIEDRLGSNDDPRKHEFFKSINFPRLEAGLIPPPWEPKANVVYAKDTGDIREFSDVKGVKFDANDEKFFKEFSTGVVPIAWQQEMIDSGLFDELSDPNRKESAAGLEDEEQQKSKSCTLL</sequence>
<accession>Q1XHL7</accession>
<keyword id="KW-0067">ATP-binding</keyword>
<keyword id="KW-0418">Kinase</keyword>
<keyword id="KW-0449">Lipoprotein</keyword>
<keyword id="KW-0472">Membrane</keyword>
<keyword id="KW-0488">Methylation</keyword>
<keyword id="KW-0547">Nucleotide-binding</keyword>
<keyword id="KW-0597">Phosphoprotein</keyword>
<keyword id="KW-0636">Prenylation</keyword>
<keyword id="KW-1185">Reference proteome</keyword>
<keyword id="KW-0716">Sensory transduction</keyword>
<keyword id="KW-0723">Serine/threonine-protein kinase</keyword>
<keyword id="KW-0808">Transferase</keyword>
<keyword id="KW-0844">Vision</keyword>
<evidence type="ECO:0000250" key="1"/>
<evidence type="ECO:0000250" key="2">
    <source>
        <dbReference type="UniProtKB" id="B6CZ18"/>
    </source>
</evidence>
<evidence type="ECO:0000250" key="3">
    <source>
        <dbReference type="UniProtKB" id="Q8WMV0"/>
    </source>
</evidence>
<evidence type="ECO:0000255" key="4"/>
<evidence type="ECO:0000255" key="5">
    <source>
        <dbReference type="PROSITE-ProRule" id="PRU00159"/>
    </source>
</evidence>
<evidence type="ECO:0000255" key="6">
    <source>
        <dbReference type="PROSITE-ProRule" id="PRU00171"/>
    </source>
</evidence>
<evidence type="ECO:0000255" key="7">
    <source>
        <dbReference type="PROSITE-ProRule" id="PRU00618"/>
    </source>
</evidence>
<evidence type="ECO:0000255" key="8">
    <source>
        <dbReference type="PROSITE-ProRule" id="PRU10027"/>
    </source>
</evidence>
<evidence type="ECO:0000256" key="9">
    <source>
        <dbReference type="SAM" id="MobiDB-lite"/>
    </source>
</evidence>
<evidence type="ECO:0000269" key="10">
    <source>
    </source>
</evidence>
<evidence type="ECO:0000305" key="11"/>
<dbReference type="EC" id="2.7.11.14" evidence="10"/>
<dbReference type="EMBL" id="AB212996">
    <property type="protein sequence ID" value="BAE92859.1"/>
    <property type="molecule type" value="mRNA"/>
</dbReference>
<dbReference type="EMBL" id="BC162212">
    <property type="protein sequence ID" value="AAI62212.1"/>
    <property type="molecule type" value="mRNA"/>
</dbReference>
<dbReference type="EMBL" id="BC162221">
    <property type="protein sequence ID" value="AAI62221.1"/>
    <property type="molecule type" value="mRNA"/>
</dbReference>
<dbReference type="SMR" id="Q1XHL7"/>
<dbReference type="FunCoup" id="Q1XHL7">
    <property type="interactions" value="2"/>
</dbReference>
<dbReference type="STRING" id="7955.ENSDARP00000072364"/>
<dbReference type="PaxDb" id="7955-ENSDARP00000072364"/>
<dbReference type="Ensembl" id="ENSDART00000077898">
    <property type="protein sequence ID" value="ENSDARP00000072364"/>
    <property type="gene ID" value="ENSDARG00000055534"/>
</dbReference>
<dbReference type="AGR" id="ZFIN:ZDB-GENE-030904-3"/>
<dbReference type="ZFIN" id="ZDB-GENE-030904-3">
    <property type="gene designation" value="grk7b"/>
</dbReference>
<dbReference type="eggNOG" id="KOG0986">
    <property type="taxonomic scope" value="Eukaryota"/>
</dbReference>
<dbReference type="HOGENOM" id="CLU_000288_63_41_1"/>
<dbReference type="InParanoid" id="Q1XHL7"/>
<dbReference type="OMA" id="DRFVQWK"/>
<dbReference type="PhylomeDB" id="Q1XHL7"/>
<dbReference type="TreeFam" id="TF313940"/>
<dbReference type="BRENDA" id="2.7.11.14">
    <property type="organism ID" value="928"/>
</dbReference>
<dbReference type="Reactome" id="R-DRE-2514859">
    <property type="pathway name" value="Inactivation, recovery and regulation of the phototransduction cascade"/>
</dbReference>
<dbReference type="PRO" id="PR:Q1XHL7"/>
<dbReference type="Proteomes" id="UP000000437">
    <property type="component" value="Unplaced"/>
</dbReference>
<dbReference type="Bgee" id="ENSDARG00000055534">
    <property type="expression patterns" value="Expressed in retina and 13 other cell types or tissues"/>
</dbReference>
<dbReference type="GO" id="GO:0005737">
    <property type="term" value="C:cytoplasm"/>
    <property type="evidence" value="ECO:0000318"/>
    <property type="project" value="GO_Central"/>
</dbReference>
<dbReference type="GO" id="GO:0016020">
    <property type="term" value="C:membrane"/>
    <property type="evidence" value="ECO:0007669"/>
    <property type="project" value="UniProtKB-SubCell"/>
</dbReference>
<dbReference type="GO" id="GO:0005524">
    <property type="term" value="F:ATP binding"/>
    <property type="evidence" value="ECO:0007669"/>
    <property type="project" value="UniProtKB-KW"/>
</dbReference>
<dbReference type="GO" id="GO:0050254">
    <property type="term" value="F:rhodopsin kinase activity"/>
    <property type="evidence" value="ECO:0000314"/>
    <property type="project" value="ZFIN"/>
</dbReference>
<dbReference type="GO" id="GO:0009966">
    <property type="term" value="P:regulation of signal transduction"/>
    <property type="evidence" value="ECO:0000318"/>
    <property type="project" value="GO_Central"/>
</dbReference>
<dbReference type="GO" id="GO:0007165">
    <property type="term" value="P:signal transduction"/>
    <property type="evidence" value="ECO:0007669"/>
    <property type="project" value="InterPro"/>
</dbReference>
<dbReference type="GO" id="GO:0007601">
    <property type="term" value="P:visual perception"/>
    <property type="evidence" value="ECO:0007669"/>
    <property type="project" value="UniProtKB-KW"/>
</dbReference>
<dbReference type="FunFam" id="1.10.510.10:FF:000074">
    <property type="entry name" value="G protein-coupled receptor kinase"/>
    <property type="match status" value="1"/>
</dbReference>
<dbReference type="Gene3D" id="3.30.200.20">
    <property type="entry name" value="Phosphorylase Kinase, domain 1"/>
    <property type="match status" value="1"/>
</dbReference>
<dbReference type="Gene3D" id="1.10.167.10">
    <property type="entry name" value="Regulator of G-protein Signalling 4, domain 2"/>
    <property type="match status" value="1"/>
</dbReference>
<dbReference type="Gene3D" id="1.10.510.10">
    <property type="entry name" value="Transferase(Phosphotransferase) domain 1"/>
    <property type="match status" value="1"/>
</dbReference>
<dbReference type="InterPro" id="IPR000961">
    <property type="entry name" value="AGC-kinase_C"/>
</dbReference>
<dbReference type="InterPro" id="IPR000239">
    <property type="entry name" value="GPCR_kinase"/>
</dbReference>
<dbReference type="InterPro" id="IPR011009">
    <property type="entry name" value="Kinase-like_dom_sf"/>
</dbReference>
<dbReference type="InterPro" id="IPR000719">
    <property type="entry name" value="Prot_kinase_dom"/>
</dbReference>
<dbReference type="InterPro" id="IPR017441">
    <property type="entry name" value="Protein_kinase_ATP_BS"/>
</dbReference>
<dbReference type="InterPro" id="IPR016137">
    <property type="entry name" value="RGS"/>
</dbReference>
<dbReference type="InterPro" id="IPR036305">
    <property type="entry name" value="RGS_sf"/>
</dbReference>
<dbReference type="InterPro" id="IPR044926">
    <property type="entry name" value="RGS_subdomain_2"/>
</dbReference>
<dbReference type="InterPro" id="IPR008271">
    <property type="entry name" value="Ser/Thr_kinase_AS"/>
</dbReference>
<dbReference type="PANTHER" id="PTHR24355">
    <property type="entry name" value="G PROTEIN-COUPLED RECEPTOR KINASE/RIBOSOMAL PROTEIN S6 KINASE"/>
    <property type="match status" value="1"/>
</dbReference>
<dbReference type="PANTHER" id="PTHR24355:SF29">
    <property type="entry name" value="RHODOPSIN KINASE GRK7-B"/>
    <property type="match status" value="1"/>
</dbReference>
<dbReference type="Pfam" id="PF00069">
    <property type="entry name" value="Pkinase"/>
    <property type="match status" value="1"/>
</dbReference>
<dbReference type="Pfam" id="PF00615">
    <property type="entry name" value="RGS"/>
    <property type="match status" value="1"/>
</dbReference>
<dbReference type="PRINTS" id="PR00717">
    <property type="entry name" value="GPCRKINASE"/>
</dbReference>
<dbReference type="SMART" id="SM00315">
    <property type="entry name" value="RGS"/>
    <property type="match status" value="1"/>
</dbReference>
<dbReference type="SMART" id="SM00220">
    <property type="entry name" value="S_TKc"/>
    <property type="match status" value="1"/>
</dbReference>
<dbReference type="SUPFAM" id="SSF56112">
    <property type="entry name" value="Protein kinase-like (PK-like)"/>
    <property type="match status" value="1"/>
</dbReference>
<dbReference type="SUPFAM" id="SSF48097">
    <property type="entry name" value="Regulator of G-protein signaling, RGS"/>
    <property type="match status" value="1"/>
</dbReference>
<dbReference type="PROSITE" id="PS51285">
    <property type="entry name" value="AGC_KINASE_CTER"/>
    <property type="match status" value="1"/>
</dbReference>
<dbReference type="PROSITE" id="PS00107">
    <property type="entry name" value="PROTEIN_KINASE_ATP"/>
    <property type="match status" value="1"/>
</dbReference>
<dbReference type="PROSITE" id="PS50011">
    <property type="entry name" value="PROTEIN_KINASE_DOM"/>
    <property type="match status" value="1"/>
</dbReference>
<dbReference type="PROSITE" id="PS00108">
    <property type="entry name" value="PROTEIN_KINASE_ST"/>
    <property type="match status" value="1"/>
</dbReference>
<dbReference type="PROSITE" id="PS50132">
    <property type="entry name" value="RGS"/>
    <property type="match status" value="1"/>
</dbReference>